<proteinExistence type="inferred from homology"/>
<organism>
    <name type="scientific">Dictyostelium discoideum</name>
    <name type="common">Social amoeba</name>
    <dbReference type="NCBI Taxonomy" id="44689"/>
    <lineage>
        <taxon>Eukaryota</taxon>
        <taxon>Amoebozoa</taxon>
        <taxon>Evosea</taxon>
        <taxon>Eumycetozoa</taxon>
        <taxon>Dictyostelia</taxon>
        <taxon>Dictyosteliales</taxon>
        <taxon>Dictyosteliaceae</taxon>
        <taxon>Dictyostelium</taxon>
    </lineage>
</organism>
<reference key="1">
    <citation type="journal article" date="2005" name="Nature">
        <title>The genome of the social amoeba Dictyostelium discoideum.</title>
        <authorList>
            <person name="Eichinger L."/>
            <person name="Pachebat J.A."/>
            <person name="Gloeckner G."/>
            <person name="Rajandream M.A."/>
            <person name="Sucgang R."/>
            <person name="Berriman M."/>
            <person name="Song J."/>
            <person name="Olsen R."/>
            <person name="Szafranski K."/>
            <person name="Xu Q."/>
            <person name="Tunggal B."/>
            <person name="Kummerfeld S."/>
            <person name="Madera M."/>
            <person name="Konfortov B.A."/>
            <person name="Rivero F."/>
            <person name="Bankier A.T."/>
            <person name="Lehmann R."/>
            <person name="Hamlin N."/>
            <person name="Davies R."/>
            <person name="Gaudet P."/>
            <person name="Fey P."/>
            <person name="Pilcher K."/>
            <person name="Chen G."/>
            <person name="Saunders D."/>
            <person name="Sodergren E.J."/>
            <person name="Davis P."/>
            <person name="Kerhornou A."/>
            <person name="Nie X."/>
            <person name="Hall N."/>
            <person name="Anjard C."/>
            <person name="Hemphill L."/>
            <person name="Bason N."/>
            <person name="Farbrother P."/>
            <person name="Desany B."/>
            <person name="Just E."/>
            <person name="Morio T."/>
            <person name="Rost R."/>
            <person name="Churcher C.M."/>
            <person name="Cooper J."/>
            <person name="Haydock S."/>
            <person name="van Driessche N."/>
            <person name="Cronin A."/>
            <person name="Goodhead I."/>
            <person name="Muzny D.M."/>
            <person name="Mourier T."/>
            <person name="Pain A."/>
            <person name="Lu M."/>
            <person name="Harper D."/>
            <person name="Lindsay R."/>
            <person name="Hauser H."/>
            <person name="James K.D."/>
            <person name="Quiles M."/>
            <person name="Madan Babu M."/>
            <person name="Saito T."/>
            <person name="Buchrieser C."/>
            <person name="Wardroper A."/>
            <person name="Felder M."/>
            <person name="Thangavelu M."/>
            <person name="Johnson D."/>
            <person name="Knights A."/>
            <person name="Loulseged H."/>
            <person name="Mungall K.L."/>
            <person name="Oliver K."/>
            <person name="Price C."/>
            <person name="Quail M.A."/>
            <person name="Urushihara H."/>
            <person name="Hernandez J."/>
            <person name="Rabbinowitsch E."/>
            <person name="Steffen D."/>
            <person name="Sanders M."/>
            <person name="Ma J."/>
            <person name="Kohara Y."/>
            <person name="Sharp S."/>
            <person name="Simmonds M.N."/>
            <person name="Spiegler S."/>
            <person name="Tivey A."/>
            <person name="Sugano S."/>
            <person name="White B."/>
            <person name="Walker D."/>
            <person name="Woodward J.R."/>
            <person name="Winckler T."/>
            <person name="Tanaka Y."/>
            <person name="Shaulsky G."/>
            <person name="Schleicher M."/>
            <person name="Weinstock G.M."/>
            <person name="Rosenthal A."/>
            <person name="Cox E.C."/>
            <person name="Chisholm R.L."/>
            <person name="Gibbs R.A."/>
            <person name="Loomis W.F."/>
            <person name="Platzer M."/>
            <person name="Kay R.R."/>
            <person name="Williams J.G."/>
            <person name="Dear P.H."/>
            <person name="Noegel A.A."/>
            <person name="Barrell B.G."/>
            <person name="Kuspa A."/>
        </authorList>
    </citation>
    <scope>NUCLEOTIDE SEQUENCE [LARGE SCALE GENOMIC DNA]</scope>
    <source>
        <strain>AX4</strain>
    </source>
</reference>
<evidence type="ECO:0000250" key="1">
    <source>
        <dbReference type="UniProtKB" id="A6NFY7"/>
    </source>
</evidence>
<evidence type="ECO:0000250" key="2">
    <source>
        <dbReference type="UniProtKB" id="Q3E785"/>
    </source>
</evidence>
<evidence type="ECO:0000305" key="3"/>
<evidence type="ECO:0000312" key="4">
    <source>
        <dbReference type="dictyBase" id="DDB_G0289475"/>
    </source>
</evidence>
<name>SDHFA_DICDI</name>
<protein>
    <recommendedName>
        <fullName evidence="1">Succinate dehydrogenase assembly factor 1A, mitochondrial</fullName>
        <shortName evidence="1">SDH assembly factor 1A</shortName>
        <shortName evidence="1">SDHAF1A</shortName>
    </recommendedName>
</protein>
<sequence length="91" mass="10459">MNTTPIRHSGLQKAVLSLYRSFLRVSNKKEMDNPSSSISNYIKTQFRLKATTIQKRDINKIESLLVKGKRQLEQIQDPEFSGFAVFTPKSK</sequence>
<feature type="chain" id="PRO_0000327918" description="Succinate dehydrogenase assembly factor 1A, mitochondrial">
    <location>
        <begin position="1"/>
        <end position="91"/>
    </location>
</feature>
<gene>
    <name evidence="4" type="primary">sdhaf1A</name>
    <name type="ORF">DDB_G0289475</name>
</gene>
<dbReference type="EMBL" id="AAFI02000141">
    <property type="protein sequence ID" value="EAL62717.1"/>
    <property type="molecule type" value="Genomic_DNA"/>
</dbReference>
<dbReference type="RefSeq" id="XP_636220.1">
    <property type="nucleotide sequence ID" value="XM_631128.1"/>
</dbReference>
<dbReference type="SMR" id="Q54HG5"/>
<dbReference type="FunCoup" id="Q54HG5">
    <property type="interactions" value="61"/>
</dbReference>
<dbReference type="PaxDb" id="44689-DDB0305170"/>
<dbReference type="EnsemblProtists" id="EAL62717">
    <property type="protein sequence ID" value="EAL62717"/>
    <property type="gene ID" value="DDB_G0289475"/>
</dbReference>
<dbReference type="GeneID" id="8627158"/>
<dbReference type="KEGG" id="ddi:DDB_G0289475"/>
<dbReference type="dictyBase" id="DDB_G0289475">
    <property type="gene designation" value="sdhaf1A"/>
</dbReference>
<dbReference type="VEuPathDB" id="AmoebaDB:DDB_G0289475"/>
<dbReference type="eggNOG" id="ENOG502SCH5">
    <property type="taxonomic scope" value="Eukaryota"/>
</dbReference>
<dbReference type="HOGENOM" id="CLU_154777_0_0_1"/>
<dbReference type="InParanoid" id="Q54HG5"/>
<dbReference type="OMA" id="VEMYSSP"/>
<dbReference type="PhylomeDB" id="Q54HG5"/>
<dbReference type="PRO" id="PR:Q54HG5"/>
<dbReference type="Proteomes" id="UP000002195">
    <property type="component" value="Chromosome 5"/>
</dbReference>
<dbReference type="GO" id="GO:0005759">
    <property type="term" value="C:mitochondrial matrix"/>
    <property type="evidence" value="ECO:0007669"/>
    <property type="project" value="UniProtKB-SubCell"/>
</dbReference>
<dbReference type="GO" id="GO:0005739">
    <property type="term" value="C:mitochondrion"/>
    <property type="evidence" value="ECO:0000318"/>
    <property type="project" value="GO_Central"/>
</dbReference>
<dbReference type="GO" id="GO:0034553">
    <property type="term" value="P:mitochondrial respiratory chain complex II assembly"/>
    <property type="evidence" value="ECO:0000318"/>
    <property type="project" value="GO_Central"/>
</dbReference>
<dbReference type="CDD" id="cd20268">
    <property type="entry name" value="Complex1_LYR_SDHAF1_LYRM8"/>
    <property type="match status" value="1"/>
</dbReference>
<dbReference type="InterPro" id="IPR008011">
    <property type="entry name" value="Complex1_LYR_dom"/>
</dbReference>
<dbReference type="InterPro" id="IPR045295">
    <property type="entry name" value="Complex1_LYR_SDHAF1_LYRM8"/>
</dbReference>
<dbReference type="PANTHER" id="PTHR13675">
    <property type="entry name" value="LYR MOTIF-CONTAINING PROTEIN 2"/>
    <property type="match status" value="1"/>
</dbReference>
<dbReference type="PANTHER" id="PTHR13675:SF1">
    <property type="entry name" value="SUCCINATE DEHYDROGENASE ASSEMBLY FACTOR 1, MITOCHONDRIAL"/>
    <property type="match status" value="1"/>
</dbReference>
<dbReference type="Pfam" id="PF05347">
    <property type="entry name" value="Complex1_LYR"/>
    <property type="match status" value="1"/>
</dbReference>
<comment type="function">
    <text evidence="1">Plays an essential role in the assembly of succinate dehydrogenase (SDH), an enzyme complex (also referred to as respiratory complex II) that is a component of both the tricarboxylic acid (TCA) cycle and the mitochondrial electron transport chain, and which couples the oxidation of succinate to fumarate with the reduction of ubiquinone (coenzyme Q) to ubiquinol. Promotes maturation of the iron-sulfur protein subunit of the SDH catalytic dimer, protecting it from the deleterious effects of oxidants. May act together with SDHAF3.</text>
</comment>
<comment type="subunit">
    <text evidence="2">Interacts with the iron-sulfur protein subunit within the SDH catalytic dimer.</text>
</comment>
<comment type="subcellular location">
    <subcellularLocation>
        <location evidence="1">Mitochondrion matrix</location>
    </subcellularLocation>
</comment>
<comment type="similarity">
    <text evidence="3">Belongs to the complex I LYR family. SDHAF1 subfamily.</text>
</comment>
<accession>Q54HG5</accession>
<keyword id="KW-0143">Chaperone</keyword>
<keyword id="KW-0496">Mitochondrion</keyword>
<keyword id="KW-1185">Reference proteome</keyword>